<evidence type="ECO:0000255" key="1">
    <source>
        <dbReference type="HAMAP-Rule" id="MF_00151"/>
    </source>
</evidence>
<feature type="chain" id="PRO_1000011087" description="Phosphopantetheine adenylyltransferase">
    <location>
        <begin position="1"/>
        <end position="160"/>
    </location>
</feature>
<feature type="binding site" evidence="1">
    <location>
        <begin position="10"/>
        <end position="11"/>
    </location>
    <ligand>
        <name>ATP</name>
        <dbReference type="ChEBI" id="CHEBI:30616"/>
    </ligand>
</feature>
<feature type="binding site" evidence="1">
    <location>
        <position position="10"/>
    </location>
    <ligand>
        <name>substrate</name>
    </ligand>
</feature>
<feature type="binding site" evidence="1">
    <location>
        <position position="18"/>
    </location>
    <ligand>
        <name>ATP</name>
        <dbReference type="ChEBI" id="CHEBI:30616"/>
    </ligand>
</feature>
<feature type="binding site" evidence="1">
    <location>
        <position position="42"/>
    </location>
    <ligand>
        <name>substrate</name>
    </ligand>
</feature>
<feature type="binding site" evidence="1">
    <location>
        <position position="74"/>
    </location>
    <ligand>
        <name>substrate</name>
    </ligand>
</feature>
<feature type="binding site" evidence="1">
    <location>
        <position position="88"/>
    </location>
    <ligand>
        <name>substrate</name>
    </ligand>
</feature>
<feature type="binding site" evidence="1">
    <location>
        <begin position="89"/>
        <end position="91"/>
    </location>
    <ligand>
        <name>ATP</name>
        <dbReference type="ChEBI" id="CHEBI:30616"/>
    </ligand>
</feature>
<feature type="binding site" evidence="1">
    <location>
        <position position="99"/>
    </location>
    <ligand>
        <name>ATP</name>
        <dbReference type="ChEBI" id="CHEBI:30616"/>
    </ligand>
</feature>
<feature type="binding site" evidence="1">
    <location>
        <begin position="124"/>
        <end position="130"/>
    </location>
    <ligand>
        <name>ATP</name>
        <dbReference type="ChEBI" id="CHEBI:30616"/>
    </ligand>
</feature>
<feature type="site" description="Transition state stabilizer" evidence="1">
    <location>
        <position position="18"/>
    </location>
</feature>
<proteinExistence type="inferred from homology"/>
<protein>
    <recommendedName>
        <fullName evidence="1">Phosphopantetheine adenylyltransferase</fullName>
        <ecNumber evidence="1">2.7.7.3</ecNumber>
    </recommendedName>
    <alternativeName>
        <fullName evidence="1">Dephospho-CoA pyrophosphorylase</fullName>
    </alternativeName>
    <alternativeName>
        <fullName evidence="1">Pantetheine-phosphate adenylyltransferase</fullName>
        <shortName evidence="1">PPAT</shortName>
    </alternativeName>
</protein>
<keyword id="KW-0067">ATP-binding</keyword>
<keyword id="KW-0173">Coenzyme A biosynthesis</keyword>
<keyword id="KW-0963">Cytoplasm</keyword>
<keyword id="KW-0460">Magnesium</keyword>
<keyword id="KW-0547">Nucleotide-binding</keyword>
<keyword id="KW-0548">Nucleotidyltransferase</keyword>
<keyword id="KW-0808">Transferase</keyword>
<sequence length="160" mass="17604">MTNKVIYPGTFDPITNGHTDLIGRAARLFDEVVVGVANSPSKRPLFDLAERVLLARQVTAHLPNVKVVGFSGLLVDFAKEQQANVLIRGLRAVSDFEYEFQLANMNRRLMPELESVFLTPAEENSFISSTLVKEVALHGGDIRQFVDPIVAKAIAAKQGK</sequence>
<accession>A4STC9</accession>
<organism>
    <name type="scientific">Aeromonas salmonicida (strain A449)</name>
    <dbReference type="NCBI Taxonomy" id="382245"/>
    <lineage>
        <taxon>Bacteria</taxon>
        <taxon>Pseudomonadati</taxon>
        <taxon>Pseudomonadota</taxon>
        <taxon>Gammaproteobacteria</taxon>
        <taxon>Aeromonadales</taxon>
        <taxon>Aeromonadaceae</taxon>
        <taxon>Aeromonas</taxon>
    </lineage>
</organism>
<reference key="1">
    <citation type="journal article" date="2008" name="BMC Genomics">
        <title>The genome of Aeromonas salmonicida subsp. salmonicida A449: insights into the evolution of a fish pathogen.</title>
        <authorList>
            <person name="Reith M.E."/>
            <person name="Singh R.K."/>
            <person name="Curtis B."/>
            <person name="Boyd J.M."/>
            <person name="Bouevitch A."/>
            <person name="Kimball J."/>
            <person name="Munholland J."/>
            <person name="Murphy C."/>
            <person name="Sarty D."/>
            <person name="Williams J."/>
            <person name="Nash J.H."/>
            <person name="Johnson S.C."/>
            <person name="Brown L.L."/>
        </authorList>
    </citation>
    <scope>NUCLEOTIDE SEQUENCE [LARGE SCALE GENOMIC DNA]</scope>
    <source>
        <strain>A449</strain>
    </source>
</reference>
<gene>
    <name evidence="1" type="primary">coaD</name>
    <name type="ordered locus">ASA_4223</name>
</gene>
<dbReference type="EC" id="2.7.7.3" evidence="1"/>
<dbReference type="EMBL" id="CP000644">
    <property type="protein sequence ID" value="ABO92151.1"/>
    <property type="molecule type" value="Genomic_DNA"/>
</dbReference>
<dbReference type="RefSeq" id="WP_005321264.1">
    <property type="nucleotide sequence ID" value="NC_009348.1"/>
</dbReference>
<dbReference type="SMR" id="A4STC9"/>
<dbReference type="STRING" id="29491.GCA_000820065_04482"/>
<dbReference type="GeneID" id="79877625"/>
<dbReference type="KEGG" id="asa:ASA_4223"/>
<dbReference type="eggNOG" id="COG0669">
    <property type="taxonomic scope" value="Bacteria"/>
</dbReference>
<dbReference type="HOGENOM" id="CLU_100149_0_1_6"/>
<dbReference type="UniPathway" id="UPA00241">
    <property type="reaction ID" value="UER00355"/>
</dbReference>
<dbReference type="Proteomes" id="UP000000225">
    <property type="component" value="Chromosome"/>
</dbReference>
<dbReference type="GO" id="GO:0005737">
    <property type="term" value="C:cytoplasm"/>
    <property type="evidence" value="ECO:0007669"/>
    <property type="project" value="UniProtKB-SubCell"/>
</dbReference>
<dbReference type="GO" id="GO:0005524">
    <property type="term" value="F:ATP binding"/>
    <property type="evidence" value="ECO:0007669"/>
    <property type="project" value="UniProtKB-KW"/>
</dbReference>
<dbReference type="GO" id="GO:0004595">
    <property type="term" value="F:pantetheine-phosphate adenylyltransferase activity"/>
    <property type="evidence" value="ECO:0007669"/>
    <property type="project" value="UniProtKB-UniRule"/>
</dbReference>
<dbReference type="GO" id="GO:0015937">
    <property type="term" value="P:coenzyme A biosynthetic process"/>
    <property type="evidence" value="ECO:0007669"/>
    <property type="project" value="UniProtKB-UniRule"/>
</dbReference>
<dbReference type="CDD" id="cd02163">
    <property type="entry name" value="PPAT"/>
    <property type="match status" value="1"/>
</dbReference>
<dbReference type="FunFam" id="3.40.50.620:FF:000012">
    <property type="entry name" value="Phosphopantetheine adenylyltransferase"/>
    <property type="match status" value="1"/>
</dbReference>
<dbReference type="Gene3D" id="3.40.50.620">
    <property type="entry name" value="HUPs"/>
    <property type="match status" value="1"/>
</dbReference>
<dbReference type="HAMAP" id="MF_00151">
    <property type="entry name" value="PPAT_bact"/>
    <property type="match status" value="1"/>
</dbReference>
<dbReference type="InterPro" id="IPR004821">
    <property type="entry name" value="Cyt_trans-like"/>
</dbReference>
<dbReference type="InterPro" id="IPR001980">
    <property type="entry name" value="PPAT"/>
</dbReference>
<dbReference type="InterPro" id="IPR014729">
    <property type="entry name" value="Rossmann-like_a/b/a_fold"/>
</dbReference>
<dbReference type="NCBIfam" id="TIGR01510">
    <property type="entry name" value="coaD_prev_kdtB"/>
    <property type="match status" value="1"/>
</dbReference>
<dbReference type="NCBIfam" id="TIGR00125">
    <property type="entry name" value="cyt_tran_rel"/>
    <property type="match status" value="1"/>
</dbReference>
<dbReference type="PANTHER" id="PTHR21342">
    <property type="entry name" value="PHOSPHOPANTETHEINE ADENYLYLTRANSFERASE"/>
    <property type="match status" value="1"/>
</dbReference>
<dbReference type="PANTHER" id="PTHR21342:SF1">
    <property type="entry name" value="PHOSPHOPANTETHEINE ADENYLYLTRANSFERASE"/>
    <property type="match status" value="1"/>
</dbReference>
<dbReference type="Pfam" id="PF01467">
    <property type="entry name" value="CTP_transf_like"/>
    <property type="match status" value="1"/>
</dbReference>
<dbReference type="PRINTS" id="PR01020">
    <property type="entry name" value="LPSBIOSNTHSS"/>
</dbReference>
<dbReference type="SUPFAM" id="SSF52374">
    <property type="entry name" value="Nucleotidylyl transferase"/>
    <property type="match status" value="1"/>
</dbReference>
<comment type="function">
    <text evidence="1">Reversibly transfers an adenylyl group from ATP to 4'-phosphopantetheine, yielding dephospho-CoA (dPCoA) and pyrophosphate.</text>
</comment>
<comment type="catalytic activity">
    <reaction evidence="1">
        <text>(R)-4'-phosphopantetheine + ATP + H(+) = 3'-dephospho-CoA + diphosphate</text>
        <dbReference type="Rhea" id="RHEA:19801"/>
        <dbReference type="ChEBI" id="CHEBI:15378"/>
        <dbReference type="ChEBI" id="CHEBI:30616"/>
        <dbReference type="ChEBI" id="CHEBI:33019"/>
        <dbReference type="ChEBI" id="CHEBI:57328"/>
        <dbReference type="ChEBI" id="CHEBI:61723"/>
        <dbReference type="EC" id="2.7.7.3"/>
    </reaction>
</comment>
<comment type="cofactor">
    <cofactor evidence="1">
        <name>Mg(2+)</name>
        <dbReference type="ChEBI" id="CHEBI:18420"/>
    </cofactor>
</comment>
<comment type="pathway">
    <text evidence="1">Cofactor biosynthesis; coenzyme A biosynthesis; CoA from (R)-pantothenate: step 4/5.</text>
</comment>
<comment type="subunit">
    <text evidence="1">Homohexamer.</text>
</comment>
<comment type="subcellular location">
    <subcellularLocation>
        <location evidence="1">Cytoplasm</location>
    </subcellularLocation>
</comment>
<comment type="similarity">
    <text evidence="1">Belongs to the bacterial CoaD family.</text>
</comment>
<name>COAD_AERS4</name>